<accession>Q04E66</accession>
<organism>
    <name type="scientific">Oenococcus oeni (strain ATCC BAA-331 / PSU-1)</name>
    <dbReference type="NCBI Taxonomy" id="203123"/>
    <lineage>
        <taxon>Bacteria</taxon>
        <taxon>Bacillati</taxon>
        <taxon>Bacillota</taxon>
        <taxon>Bacilli</taxon>
        <taxon>Lactobacillales</taxon>
        <taxon>Lactobacillaceae</taxon>
        <taxon>Oenococcus</taxon>
    </lineage>
</organism>
<keyword id="KW-1185">Reference proteome</keyword>
<keyword id="KW-0687">Ribonucleoprotein</keyword>
<keyword id="KW-0689">Ribosomal protein</keyword>
<keyword id="KW-0694">RNA-binding</keyword>
<keyword id="KW-0699">rRNA-binding</keyword>
<feature type="chain" id="PRO_0000293458" description="Small ribosomal subunit protein uS4">
    <location>
        <begin position="1"/>
        <end position="204"/>
    </location>
</feature>
<feature type="domain" description="S4 RNA-binding" evidence="1">
    <location>
        <begin position="94"/>
        <end position="154"/>
    </location>
</feature>
<feature type="region of interest" description="Disordered" evidence="2">
    <location>
        <begin position="22"/>
        <end position="43"/>
    </location>
</feature>
<comment type="function">
    <text evidence="1">One of the primary rRNA binding proteins, it binds directly to 16S rRNA where it nucleates assembly of the body of the 30S subunit.</text>
</comment>
<comment type="function">
    <text evidence="1">With S5 and S12 plays an important role in translational accuracy.</text>
</comment>
<comment type="subunit">
    <text evidence="1">Part of the 30S ribosomal subunit. Contacts protein S5. The interaction surface between S4 and S5 is involved in control of translational fidelity.</text>
</comment>
<comment type="similarity">
    <text evidence="1">Belongs to the universal ribosomal protein uS4 family.</text>
</comment>
<comment type="sequence caution" evidence="3">
    <conflict type="erroneous initiation">
        <sequence resource="EMBL-CDS" id="ABJ57256"/>
    </conflict>
</comment>
<gene>
    <name evidence="1" type="primary">rpsD</name>
    <name type="ordered locus">OEOE_1394</name>
</gene>
<protein>
    <recommendedName>
        <fullName evidence="1">Small ribosomal subunit protein uS4</fullName>
    </recommendedName>
    <alternativeName>
        <fullName evidence="3">30S ribosomal protein S4</fullName>
    </alternativeName>
</protein>
<sequence length="204" mass="23277">MSRYTGPKWRLSRRLGISLSGSGKELARRPYAPGDHGNTGRRPKLSEYATQLREKQKLRFTYGLSERQFHNLFLKAGKIRKGLHGTNFFILLETRLDSVVFRLGLASTRPQARQLVNHGHILVDGKRVTIPSYEVKPGQIISVRERSKKIVPILNSVEASLNNTPFVEFDADKLEGKLTRYPEREELGADINESLIVEYYNRLG</sequence>
<evidence type="ECO:0000255" key="1">
    <source>
        <dbReference type="HAMAP-Rule" id="MF_01306"/>
    </source>
</evidence>
<evidence type="ECO:0000256" key="2">
    <source>
        <dbReference type="SAM" id="MobiDB-lite"/>
    </source>
</evidence>
<evidence type="ECO:0000305" key="3"/>
<reference key="1">
    <citation type="journal article" date="2006" name="Proc. Natl. Acad. Sci. U.S.A.">
        <title>Comparative genomics of the lactic acid bacteria.</title>
        <authorList>
            <person name="Makarova K.S."/>
            <person name="Slesarev A."/>
            <person name="Wolf Y.I."/>
            <person name="Sorokin A."/>
            <person name="Mirkin B."/>
            <person name="Koonin E.V."/>
            <person name="Pavlov A."/>
            <person name="Pavlova N."/>
            <person name="Karamychev V."/>
            <person name="Polouchine N."/>
            <person name="Shakhova V."/>
            <person name="Grigoriev I."/>
            <person name="Lou Y."/>
            <person name="Rohksar D."/>
            <person name="Lucas S."/>
            <person name="Huang K."/>
            <person name="Goodstein D.M."/>
            <person name="Hawkins T."/>
            <person name="Plengvidhya V."/>
            <person name="Welker D."/>
            <person name="Hughes J."/>
            <person name="Goh Y."/>
            <person name="Benson A."/>
            <person name="Baldwin K."/>
            <person name="Lee J.-H."/>
            <person name="Diaz-Muniz I."/>
            <person name="Dosti B."/>
            <person name="Smeianov V."/>
            <person name="Wechter W."/>
            <person name="Barabote R."/>
            <person name="Lorca G."/>
            <person name="Altermann E."/>
            <person name="Barrangou R."/>
            <person name="Ganesan B."/>
            <person name="Xie Y."/>
            <person name="Rawsthorne H."/>
            <person name="Tamir D."/>
            <person name="Parker C."/>
            <person name="Breidt F."/>
            <person name="Broadbent J.R."/>
            <person name="Hutkins R."/>
            <person name="O'Sullivan D."/>
            <person name="Steele J."/>
            <person name="Unlu G."/>
            <person name="Saier M.H. Jr."/>
            <person name="Klaenhammer T."/>
            <person name="Richardson P."/>
            <person name="Kozyavkin S."/>
            <person name="Weimer B.C."/>
            <person name="Mills D.A."/>
        </authorList>
    </citation>
    <scope>NUCLEOTIDE SEQUENCE [LARGE SCALE GENOMIC DNA]</scope>
    <source>
        <strain>ATCC BAA-331 / PSU-1</strain>
    </source>
</reference>
<dbReference type="EMBL" id="CP000411">
    <property type="protein sequence ID" value="ABJ57256.1"/>
    <property type="status" value="ALT_INIT"/>
    <property type="molecule type" value="Genomic_DNA"/>
</dbReference>
<dbReference type="RefSeq" id="WP_026163821.1">
    <property type="nucleotide sequence ID" value="NC_008528.1"/>
</dbReference>
<dbReference type="SMR" id="Q04E66"/>
<dbReference type="STRING" id="203123.OEOE_1394"/>
<dbReference type="GeneID" id="75066292"/>
<dbReference type="KEGG" id="ooe:OEOE_1394"/>
<dbReference type="eggNOG" id="COG0522">
    <property type="taxonomic scope" value="Bacteria"/>
</dbReference>
<dbReference type="HOGENOM" id="CLU_092403_0_1_9"/>
<dbReference type="Proteomes" id="UP000000774">
    <property type="component" value="Chromosome"/>
</dbReference>
<dbReference type="GO" id="GO:0015935">
    <property type="term" value="C:small ribosomal subunit"/>
    <property type="evidence" value="ECO:0007669"/>
    <property type="project" value="InterPro"/>
</dbReference>
<dbReference type="GO" id="GO:0019843">
    <property type="term" value="F:rRNA binding"/>
    <property type="evidence" value="ECO:0007669"/>
    <property type="project" value="UniProtKB-UniRule"/>
</dbReference>
<dbReference type="GO" id="GO:0003735">
    <property type="term" value="F:structural constituent of ribosome"/>
    <property type="evidence" value="ECO:0007669"/>
    <property type="project" value="InterPro"/>
</dbReference>
<dbReference type="GO" id="GO:0042274">
    <property type="term" value="P:ribosomal small subunit biogenesis"/>
    <property type="evidence" value="ECO:0007669"/>
    <property type="project" value="TreeGrafter"/>
</dbReference>
<dbReference type="GO" id="GO:0006412">
    <property type="term" value="P:translation"/>
    <property type="evidence" value="ECO:0007669"/>
    <property type="project" value="UniProtKB-UniRule"/>
</dbReference>
<dbReference type="CDD" id="cd00165">
    <property type="entry name" value="S4"/>
    <property type="match status" value="1"/>
</dbReference>
<dbReference type="FunFam" id="3.10.290.10:FF:000001">
    <property type="entry name" value="30S ribosomal protein S4"/>
    <property type="match status" value="1"/>
</dbReference>
<dbReference type="Gene3D" id="1.10.1050.10">
    <property type="entry name" value="Ribosomal Protein S4 Delta 41, Chain A, domain 1"/>
    <property type="match status" value="1"/>
</dbReference>
<dbReference type="Gene3D" id="3.10.290.10">
    <property type="entry name" value="RNA-binding S4 domain"/>
    <property type="match status" value="1"/>
</dbReference>
<dbReference type="HAMAP" id="MF_01306_B">
    <property type="entry name" value="Ribosomal_uS4_B"/>
    <property type="match status" value="1"/>
</dbReference>
<dbReference type="InterPro" id="IPR022801">
    <property type="entry name" value="Ribosomal_uS4"/>
</dbReference>
<dbReference type="InterPro" id="IPR005709">
    <property type="entry name" value="Ribosomal_uS4_bac-type"/>
</dbReference>
<dbReference type="InterPro" id="IPR018079">
    <property type="entry name" value="Ribosomal_uS4_CS"/>
</dbReference>
<dbReference type="InterPro" id="IPR001912">
    <property type="entry name" value="Ribosomal_uS4_N"/>
</dbReference>
<dbReference type="InterPro" id="IPR002942">
    <property type="entry name" value="S4_RNA-bd"/>
</dbReference>
<dbReference type="InterPro" id="IPR036986">
    <property type="entry name" value="S4_RNA-bd_sf"/>
</dbReference>
<dbReference type="NCBIfam" id="NF003717">
    <property type="entry name" value="PRK05327.1"/>
    <property type="match status" value="1"/>
</dbReference>
<dbReference type="NCBIfam" id="TIGR01017">
    <property type="entry name" value="rpsD_bact"/>
    <property type="match status" value="1"/>
</dbReference>
<dbReference type="PANTHER" id="PTHR11831">
    <property type="entry name" value="30S 40S RIBOSOMAL PROTEIN"/>
    <property type="match status" value="1"/>
</dbReference>
<dbReference type="PANTHER" id="PTHR11831:SF4">
    <property type="entry name" value="SMALL RIBOSOMAL SUBUNIT PROTEIN US4M"/>
    <property type="match status" value="1"/>
</dbReference>
<dbReference type="Pfam" id="PF00163">
    <property type="entry name" value="Ribosomal_S4"/>
    <property type="match status" value="1"/>
</dbReference>
<dbReference type="Pfam" id="PF01479">
    <property type="entry name" value="S4"/>
    <property type="match status" value="1"/>
</dbReference>
<dbReference type="SMART" id="SM01390">
    <property type="entry name" value="Ribosomal_S4"/>
    <property type="match status" value="1"/>
</dbReference>
<dbReference type="SMART" id="SM00363">
    <property type="entry name" value="S4"/>
    <property type="match status" value="1"/>
</dbReference>
<dbReference type="SUPFAM" id="SSF55174">
    <property type="entry name" value="Alpha-L RNA-binding motif"/>
    <property type="match status" value="1"/>
</dbReference>
<dbReference type="PROSITE" id="PS00632">
    <property type="entry name" value="RIBOSOMAL_S4"/>
    <property type="match status" value="1"/>
</dbReference>
<dbReference type="PROSITE" id="PS50889">
    <property type="entry name" value="S4"/>
    <property type="match status" value="1"/>
</dbReference>
<name>RS4_OENOB</name>
<proteinExistence type="inferred from homology"/>